<comment type="function">
    <text evidence="1">Catalyzes the condensation reaction of fatty acid synthesis by the addition to an acyl acceptor of two carbons from malonyl-ACP. Catalyzes the first condensation reaction which initiates fatty acid synthesis and may therefore play a role in governing the total rate of fatty acid production. Possesses both acetoacetyl-ACP synthase and acetyl transacylase activities. Its substrate specificity determines the biosynthesis of branched-chain and/or straight-chain of fatty acids.</text>
</comment>
<comment type="catalytic activity">
    <reaction evidence="1">
        <text>malonyl-[ACP] + acetyl-CoA + H(+) = 3-oxobutanoyl-[ACP] + CO2 + CoA</text>
        <dbReference type="Rhea" id="RHEA:12080"/>
        <dbReference type="Rhea" id="RHEA-COMP:9623"/>
        <dbReference type="Rhea" id="RHEA-COMP:9625"/>
        <dbReference type="ChEBI" id="CHEBI:15378"/>
        <dbReference type="ChEBI" id="CHEBI:16526"/>
        <dbReference type="ChEBI" id="CHEBI:57287"/>
        <dbReference type="ChEBI" id="CHEBI:57288"/>
        <dbReference type="ChEBI" id="CHEBI:78449"/>
        <dbReference type="ChEBI" id="CHEBI:78450"/>
        <dbReference type="EC" id="2.3.1.180"/>
    </reaction>
</comment>
<comment type="pathway">
    <text evidence="1">Lipid metabolism; fatty acid biosynthesis.</text>
</comment>
<comment type="subunit">
    <text evidence="1">Homodimer.</text>
</comment>
<comment type="subcellular location">
    <subcellularLocation>
        <location evidence="1">Cytoplasm</location>
    </subcellularLocation>
</comment>
<comment type="domain">
    <text evidence="1">The last Arg residue of the ACP-binding site is essential for the weak association between ACP/AcpP and FabH.</text>
</comment>
<comment type="similarity">
    <text evidence="1">Belongs to the thiolase-like superfamily. FabH family.</text>
</comment>
<proteinExistence type="inferred from homology"/>
<name>FABH1_BACAN</name>
<feature type="chain" id="PRO_0000110393" description="Beta-ketoacyl-[acyl-carrier-protein] synthase III 1">
    <location>
        <begin position="1"/>
        <end position="310"/>
    </location>
</feature>
<feature type="region of interest" description="ACP-binding" evidence="1">
    <location>
        <begin position="236"/>
        <end position="240"/>
    </location>
</feature>
<feature type="active site" evidence="1">
    <location>
        <position position="112"/>
    </location>
</feature>
<feature type="active site" evidence="1">
    <location>
        <position position="235"/>
    </location>
</feature>
<feature type="active site" evidence="1">
    <location>
        <position position="265"/>
    </location>
</feature>
<sequence>MNVGILGIGRYVPEKVVTNHDLEKIMDTSDEWIRTRTGIAERRIADDTIDTSYMAVEASKKALEDAGISGEDIDLILVATVTPDRAFPAVACVIQEAIGAKHAAAMDLSAACAGFMYGMITAQQFIQTGTYKNVLVVGSDKLSKIVDWNDRNTAVLFGDGAGAIVMGAVSEGKGVLSFELGADGSGGKHLYQDEYVMMNGREVFKFAVRQLGDSCLRVLDKAGLTKEDVDFLVPHQANIRIMESARERLNLPQEKMSMTIEKFGNTSASSIPIAMVEELQNGRIQDGDLIILVGFGGGLTWGAVALRWGK</sequence>
<organism>
    <name type="scientific">Bacillus anthracis</name>
    <dbReference type="NCBI Taxonomy" id="1392"/>
    <lineage>
        <taxon>Bacteria</taxon>
        <taxon>Bacillati</taxon>
        <taxon>Bacillota</taxon>
        <taxon>Bacilli</taxon>
        <taxon>Bacillales</taxon>
        <taxon>Bacillaceae</taxon>
        <taxon>Bacillus</taxon>
        <taxon>Bacillus cereus group</taxon>
    </lineage>
</organism>
<keyword id="KW-0012">Acyltransferase</keyword>
<keyword id="KW-0963">Cytoplasm</keyword>
<keyword id="KW-0275">Fatty acid biosynthesis</keyword>
<keyword id="KW-0276">Fatty acid metabolism</keyword>
<keyword id="KW-0444">Lipid biosynthesis</keyword>
<keyword id="KW-0443">Lipid metabolism</keyword>
<keyword id="KW-0511">Multifunctional enzyme</keyword>
<keyword id="KW-1185">Reference proteome</keyword>
<keyword id="KW-0808">Transferase</keyword>
<reference key="1">
    <citation type="journal article" date="2003" name="Nature">
        <title>The genome sequence of Bacillus anthracis Ames and comparison to closely related bacteria.</title>
        <authorList>
            <person name="Read T.D."/>
            <person name="Peterson S.N."/>
            <person name="Tourasse N.J."/>
            <person name="Baillie L.W."/>
            <person name="Paulsen I.T."/>
            <person name="Nelson K.E."/>
            <person name="Tettelin H."/>
            <person name="Fouts D.E."/>
            <person name="Eisen J.A."/>
            <person name="Gill S.R."/>
            <person name="Holtzapple E.K."/>
            <person name="Okstad O.A."/>
            <person name="Helgason E."/>
            <person name="Rilstone J."/>
            <person name="Wu M."/>
            <person name="Kolonay J.F."/>
            <person name="Beanan M.J."/>
            <person name="Dodson R.J."/>
            <person name="Brinkac L.M."/>
            <person name="Gwinn M.L."/>
            <person name="DeBoy R.T."/>
            <person name="Madpu R."/>
            <person name="Daugherty S.C."/>
            <person name="Durkin A.S."/>
            <person name="Haft D.H."/>
            <person name="Nelson W.C."/>
            <person name="Peterson J.D."/>
            <person name="Pop M."/>
            <person name="Khouri H.M."/>
            <person name="Radune D."/>
            <person name="Benton J.L."/>
            <person name="Mahamoud Y."/>
            <person name="Jiang L."/>
            <person name="Hance I.R."/>
            <person name="Weidman J.F."/>
            <person name="Berry K.J."/>
            <person name="Plaut R.D."/>
            <person name="Wolf A.M."/>
            <person name="Watkins K.L."/>
            <person name="Nierman W.C."/>
            <person name="Hazen A."/>
            <person name="Cline R.T."/>
            <person name="Redmond C."/>
            <person name="Thwaite J.E."/>
            <person name="White O."/>
            <person name="Salzberg S.L."/>
            <person name="Thomason B."/>
            <person name="Friedlander A.M."/>
            <person name="Koehler T.M."/>
            <person name="Hanna P.C."/>
            <person name="Kolstoe A.-B."/>
            <person name="Fraser C.M."/>
        </authorList>
    </citation>
    <scope>NUCLEOTIDE SEQUENCE [LARGE SCALE GENOMIC DNA]</scope>
    <source>
        <strain>Ames / isolate Porton</strain>
    </source>
</reference>
<reference key="2">
    <citation type="journal article" date="2009" name="J. Bacteriol.">
        <title>The complete genome sequence of Bacillus anthracis Ames 'Ancestor'.</title>
        <authorList>
            <person name="Ravel J."/>
            <person name="Jiang L."/>
            <person name="Stanley S.T."/>
            <person name="Wilson M.R."/>
            <person name="Decker R.S."/>
            <person name="Read T.D."/>
            <person name="Worsham P."/>
            <person name="Keim P.S."/>
            <person name="Salzberg S.L."/>
            <person name="Fraser-Liggett C.M."/>
            <person name="Rasko D.A."/>
        </authorList>
    </citation>
    <scope>NUCLEOTIDE SEQUENCE [LARGE SCALE GENOMIC DNA]</scope>
    <source>
        <strain>Ames ancestor</strain>
    </source>
</reference>
<reference key="3">
    <citation type="submission" date="2004-01" db="EMBL/GenBank/DDBJ databases">
        <title>Complete genome sequence of Bacillus anthracis Sterne.</title>
        <authorList>
            <person name="Brettin T.S."/>
            <person name="Bruce D."/>
            <person name="Challacombe J.F."/>
            <person name="Gilna P."/>
            <person name="Han C."/>
            <person name="Hill K."/>
            <person name="Hitchcock P."/>
            <person name="Jackson P."/>
            <person name="Keim P."/>
            <person name="Longmire J."/>
            <person name="Lucas S."/>
            <person name="Okinaka R."/>
            <person name="Richardson P."/>
            <person name="Rubin E."/>
            <person name="Tice H."/>
        </authorList>
    </citation>
    <scope>NUCLEOTIDE SEQUENCE [LARGE SCALE GENOMIC DNA]</scope>
    <source>
        <strain>Sterne</strain>
    </source>
</reference>
<accession>Q81JG0</accession>
<accession>Q6I213</accession>
<accession>Q6KVV0</accession>
<evidence type="ECO:0000255" key="1">
    <source>
        <dbReference type="HAMAP-Rule" id="MF_01815"/>
    </source>
</evidence>
<protein>
    <recommendedName>
        <fullName evidence="1">Beta-ketoacyl-[acyl-carrier-protein] synthase III 1</fullName>
        <shortName evidence="1">Beta-ketoacyl-ACP synthase III 1</shortName>
        <shortName evidence="1">KAS III 1</shortName>
        <ecNumber evidence="1">2.3.1.180</ecNumber>
    </recommendedName>
    <alternativeName>
        <fullName evidence="1">3-oxoacyl-[acyl-carrier-protein] synthase 3 1</fullName>
    </alternativeName>
    <alternativeName>
        <fullName evidence="1">3-oxoacyl-[acyl-carrier-protein] synthase III 1</fullName>
    </alternativeName>
</protein>
<dbReference type="EC" id="2.3.1.180" evidence="1"/>
<dbReference type="EMBL" id="AE016879">
    <property type="protein sequence ID" value="AAP25147.1"/>
    <property type="molecule type" value="Genomic_DNA"/>
</dbReference>
<dbReference type="EMBL" id="AE017334">
    <property type="protein sequence ID" value="AAT30271.1"/>
    <property type="molecule type" value="Genomic_DNA"/>
</dbReference>
<dbReference type="EMBL" id="AE017225">
    <property type="protein sequence ID" value="AAT53418.1"/>
    <property type="molecule type" value="Genomic_DNA"/>
</dbReference>
<dbReference type="RefSeq" id="NP_843661.1">
    <property type="nucleotide sequence ID" value="NC_003997.3"/>
</dbReference>
<dbReference type="RefSeq" id="WP_001100539.1">
    <property type="nucleotide sequence ID" value="NZ_WXXJ01000044.1"/>
</dbReference>
<dbReference type="RefSeq" id="YP_027367.1">
    <property type="nucleotide sequence ID" value="NC_005945.1"/>
</dbReference>
<dbReference type="SMR" id="Q81JG0"/>
<dbReference type="STRING" id="261594.GBAA_1184"/>
<dbReference type="DNASU" id="1089235"/>
<dbReference type="GeneID" id="45021192"/>
<dbReference type="KEGG" id="ban:BA_1184"/>
<dbReference type="KEGG" id="bar:GBAA_1184"/>
<dbReference type="KEGG" id="bat:BAS1095"/>
<dbReference type="PATRIC" id="fig|198094.11.peg.1163"/>
<dbReference type="eggNOG" id="COG0332">
    <property type="taxonomic scope" value="Bacteria"/>
</dbReference>
<dbReference type="HOGENOM" id="CLU_039592_3_1_9"/>
<dbReference type="OMA" id="WGSEGDK"/>
<dbReference type="OrthoDB" id="9815506at2"/>
<dbReference type="UniPathway" id="UPA00094"/>
<dbReference type="Proteomes" id="UP000000427">
    <property type="component" value="Chromosome"/>
</dbReference>
<dbReference type="Proteomes" id="UP000000594">
    <property type="component" value="Chromosome"/>
</dbReference>
<dbReference type="GO" id="GO:0005737">
    <property type="term" value="C:cytoplasm"/>
    <property type="evidence" value="ECO:0007669"/>
    <property type="project" value="UniProtKB-SubCell"/>
</dbReference>
<dbReference type="GO" id="GO:0004315">
    <property type="term" value="F:3-oxoacyl-[acyl-carrier-protein] synthase activity"/>
    <property type="evidence" value="ECO:0007669"/>
    <property type="project" value="InterPro"/>
</dbReference>
<dbReference type="GO" id="GO:0033818">
    <property type="term" value="F:beta-ketoacyl-acyl-carrier-protein synthase III activity"/>
    <property type="evidence" value="ECO:0007669"/>
    <property type="project" value="UniProtKB-UniRule"/>
</dbReference>
<dbReference type="GO" id="GO:0006633">
    <property type="term" value="P:fatty acid biosynthetic process"/>
    <property type="evidence" value="ECO:0007669"/>
    <property type="project" value="UniProtKB-UniRule"/>
</dbReference>
<dbReference type="CDD" id="cd00830">
    <property type="entry name" value="KAS_III"/>
    <property type="match status" value="1"/>
</dbReference>
<dbReference type="FunFam" id="3.40.47.10:FF:000004">
    <property type="entry name" value="3-oxoacyl-[acyl-carrier-protein] synthase 3"/>
    <property type="match status" value="1"/>
</dbReference>
<dbReference type="Gene3D" id="3.40.47.10">
    <property type="match status" value="1"/>
</dbReference>
<dbReference type="HAMAP" id="MF_01815">
    <property type="entry name" value="FabH"/>
    <property type="match status" value="1"/>
</dbReference>
<dbReference type="InterPro" id="IPR013747">
    <property type="entry name" value="ACP_syn_III_C"/>
</dbReference>
<dbReference type="InterPro" id="IPR013751">
    <property type="entry name" value="ACP_syn_III_N"/>
</dbReference>
<dbReference type="InterPro" id="IPR004655">
    <property type="entry name" value="FabH"/>
</dbReference>
<dbReference type="InterPro" id="IPR016039">
    <property type="entry name" value="Thiolase-like"/>
</dbReference>
<dbReference type="NCBIfam" id="TIGR00747">
    <property type="entry name" value="fabH"/>
    <property type="match status" value="1"/>
</dbReference>
<dbReference type="NCBIfam" id="NF006829">
    <property type="entry name" value="PRK09352.1"/>
    <property type="match status" value="1"/>
</dbReference>
<dbReference type="PANTHER" id="PTHR43091">
    <property type="entry name" value="3-OXOACYL-[ACYL-CARRIER-PROTEIN] SYNTHASE"/>
    <property type="match status" value="1"/>
</dbReference>
<dbReference type="PANTHER" id="PTHR43091:SF1">
    <property type="entry name" value="BETA-KETOACYL-[ACYL-CARRIER-PROTEIN] SYNTHASE III, CHLOROPLASTIC"/>
    <property type="match status" value="1"/>
</dbReference>
<dbReference type="Pfam" id="PF08545">
    <property type="entry name" value="ACP_syn_III"/>
    <property type="match status" value="1"/>
</dbReference>
<dbReference type="Pfam" id="PF08541">
    <property type="entry name" value="ACP_syn_III_C"/>
    <property type="match status" value="1"/>
</dbReference>
<dbReference type="SUPFAM" id="SSF53901">
    <property type="entry name" value="Thiolase-like"/>
    <property type="match status" value="1"/>
</dbReference>
<gene>
    <name evidence="1" type="primary">fabH1</name>
    <name type="synonym">fabH</name>
    <name type="ordered locus">BA_1184</name>
    <name type="ordered locus">GBAA_1184</name>
    <name type="ordered locus">BAS1095</name>
</gene>